<reference key="1">
    <citation type="journal article" date="2006" name="BMC Genomics">
        <title>Complete genome sequence of Shigella flexneri 5b and comparison with Shigella flexneri 2a.</title>
        <authorList>
            <person name="Nie H."/>
            <person name="Yang F."/>
            <person name="Zhang X."/>
            <person name="Yang J."/>
            <person name="Chen L."/>
            <person name="Wang J."/>
            <person name="Xiong Z."/>
            <person name="Peng J."/>
            <person name="Sun L."/>
            <person name="Dong J."/>
            <person name="Xue Y."/>
            <person name="Xu X."/>
            <person name="Chen S."/>
            <person name="Yao Z."/>
            <person name="Shen Y."/>
            <person name="Jin Q."/>
        </authorList>
    </citation>
    <scope>NUCLEOTIDE SEQUENCE [LARGE SCALE GENOMIC DNA]</scope>
    <source>
        <strain>8401</strain>
    </source>
</reference>
<protein>
    <recommendedName>
        <fullName evidence="1">Ribosome-recycling factor</fullName>
        <shortName evidence="1">RRF</shortName>
    </recommendedName>
    <alternativeName>
        <fullName evidence="1">Ribosome-releasing factor</fullName>
    </alternativeName>
</protein>
<proteinExistence type="inferred from homology"/>
<gene>
    <name evidence="1" type="primary">frr</name>
    <name type="ordered locus">SFV_0155</name>
</gene>
<name>RRF_SHIF8</name>
<feature type="chain" id="PRO_1000003268" description="Ribosome-recycling factor">
    <location>
        <begin position="1"/>
        <end position="185"/>
    </location>
</feature>
<feature type="modified residue" description="N6-acetyllysine" evidence="1">
    <location>
        <position position="162"/>
    </location>
</feature>
<accession>Q0T837</accession>
<sequence>MISDIRKDAEVRMDKCVEAFKTQISKIRTGRASPSLLDGIVVEYYGTPTPLRQLASVTVEDSRTLKINVFDRSMSPAVEKAIMASDLGLNPNSAGSDIRVPLPPLTEERRKDLTKIVRGEAEQARVAVRNVRRDANDKVKALLKDKEISEDDDRRSQDDVQKLTDAAIKKIEAALADKEAELMQF</sequence>
<evidence type="ECO:0000255" key="1">
    <source>
        <dbReference type="HAMAP-Rule" id="MF_00040"/>
    </source>
</evidence>
<comment type="function">
    <text evidence="1">Responsible for the release of ribosomes from messenger RNA at the termination of protein biosynthesis. May increase the efficiency of translation by recycling ribosomes from one round of translation to another.</text>
</comment>
<comment type="subcellular location">
    <subcellularLocation>
        <location evidence="1">Cytoplasm</location>
    </subcellularLocation>
</comment>
<comment type="similarity">
    <text evidence="1">Belongs to the RRF family.</text>
</comment>
<keyword id="KW-0007">Acetylation</keyword>
<keyword id="KW-0963">Cytoplasm</keyword>
<keyword id="KW-0648">Protein biosynthesis</keyword>
<dbReference type="EMBL" id="CP000266">
    <property type="protein sequence ID" value="ABF02439.1"/>
    <property type="molecule type" value="Genomic_DNA"/>
</dbReference>
<dbReference type="RefSeq" id="WP_000622418.1">
    <property type="nucleotide sequence ID" value="NC_008258.1"/>
</dbReference>
<dbReference type="SMR" id="Q0T837"/>
<dbReference type="GeneID" id="93777253"/>
<dbReference type="KEGG" id="sfv:SFV_0155"/>
<dbReference type="HOGENOM" id="CLU_073981_2_1_6"/>
<dbReference type="Proteomes" id="UP000000659">
    <property type="component" value="Chromosome"/>
</dbReference>
<dbReference type="GO" id="GO:0005829">
    <property type="term" value="C:cytosol"/>
    <property type="evidence" value="ECO:0007669"/>
    <property type="project" value="GOC"/>
</dbReference>
<dbReference type="GO" id="GO:0043023">
    <property type="term" value="F:ribosomal large subunit binding"/>
    <property type="evidence" value="ECO:0007669"/>
    <property type="project" value="TreeGrafter"/>
</dbReference>
<dbReference type="GO" id="GO:0002184">
    <property type="term" value="P:cytoplasmic translational termination"/>
    <property type="evidence" value="ECO:0007669"/>
    <property type="project" value="TreeGrafter"/>
</dbReference>
<dbReference type="CDD" id="cd00520">
    <property type="entry name" value="RRF"/>
    <property type="match status" value="1"/>
</dbReference>
<dbReference type="FunFam" id="1.10.132.20:FF:000001">
    <property type="entry name" value="Ribosome-recycling factor"/>
    <property type="match status" value="1"/>
</dbReference>
<dbReference type="FunFam" id="3.30.1360.40:FF:000001">
    <property type="entry name" value="Ribosome-recycling factor"/>
    <property type="match status" value="1"/>
</dbReference>
<dbReference type="Gene3D" id="3.30.1360.40">
    <property type="match status" value="1"/>
</dbReference>
<dbReference type="Gene3D" id="1.10.132.20">
    <property type="entry name" value="Ribosome-recycling factor"/>
    <property type="match status" value="1"/>
</dbReference>
<dbReference type="HAMAP" id="MF_00040">
    <property type="entry name" value="RRF"/>
    <property type="match status" value="1"/>
</dbReference>
<dbReference type="InterPro" id="IPR002661">
    <property type="entry name" value="Ribosome_recyc_fac"/>
</dbReference>
<dbReference type="InterPro" id="IPR023584">
    <property type="entry name" value="Ribosome_recyc_fac_dom"/>
</dbReference>
<dbReference type="InterPro" id="IPR036191">
    <property type="entry name" value="RRF_sf"/>
</dbReference>
<dbReference type="NCBIfam" id="TIGR00496">
    <property type="entry name" value="frr"/>
    <property type="match status" value="1"/>
</dbReference>
<dbReference type="PANTHER" id="PTHR20982:SF3">
    <property type="entry name" value="MITOCHONDRIAL RIBOSOME RECYCLING FACTOR PSEUDO 1"/>
    <property type="match status" value="1"/>
</dbReference>
<dbReference type="PANTHER" id="PTHR20982">
    <property type="entry name" value="RIBOSOME RECYCLING FACTOR"/>
    <property type="match status" value="1"/>
</dbReference>
<dbReference type="Pfam" id="PF01765">
    <property type="entry name" value="RRF"/>
    <property type="match status" value="1"/>
</dbReference>
<dbReference type="SUPFAM" id="SSF55194">
    <property type="entry name" value="Ribosome recycling factor, RRF"/>
    <property type="match status" value="1"/>
</dbReference>
<organism>
    <name type="scientific">Shigella flexneri serotype 5b (strain 8401)</name>
    <dbReference type="NCBI Taxonomy" id="373384"/>
    <lineage>
        <taxon>Bacteria</taxon>
        <taxon>Pseudomonadati</taxon>
        <taxon>Pseudomonadota</taxon>
        <taxon>Gammaproteobacteria</taxon>
        <taxon>Enterobacterales</taxon>
        <taxon>Enterobacteriaceae</taxon>
        <taxon>Shigella</taxon>
    </lineage>
</organism>